<evidence type="ECO:0000250" key="1"/>
<evidence type="ECO:0000250" key="2">
    <source>
        <dbReference type="UniProtKB" id="P0A9P4"/>
    </source>
</evidence>
<evidence type="ECO:0000269" key="3">
    <source>
    </source>
</evidence>
<evidence type="ECO:0000305" key="4"/>
<comment type="catalytic activity">
    <reaction>
        <text>[thioredoxin]-dithiol + NADP(+) = [thioredoxin]-disulfide + NADPH + H(+)</text>
        <dbReference type="Rhea" id="RHEA:20345"/>
        <dbReference type="Rhea" id="RHEA-COMP:10698"/>
        <dbReference type="Rhea" id="RHEA-COMP:10700"/>
        <dbReference type="ChEBI" id="CHEBI:15378"/>
        <dbReference type="ChEBI" id="CHEBI:29950"/>
        <dbReference type="ChEBI" id="CHEBI:50058"/>
        <dbReference type="ChEBI" id="CHEBI:57783"/>
        <dbReference type="ChEBI" id="CHEBI:58349"/>
        <dbReference type="EC" id="1.8.1.9"/>
    </reaction>
</comment>
<comment type="cofactor">
    <cofactor evidence="2">
        <name>FAD</name>
        <dbReference type="ChEBI" id="CHEBI:57692"/>
    </cofactor>
    <text evidence="2">Binds 1 FAD per subunit.</text>
</comment>
<comment type="subunit">
    <text evidence="2">Homodimer.</text>
</comment>
<comment type="subcellular location">
    <subcellularLocation>
        <location evidence="1">Cytoplasm</location>
    </subcellularLocation>
</comment>
<comment type="induction">
    <text>By heat shock, salt stress, oxidative stress, glucose limitation and oxygen limitation.</text>
</comment>
<comment type="miscellaneous">
    <text evidence="1">The active site is a redox-active disulfide bond.</text>
</comment>
<comment type="similarity">
    <text evidence="4">Belongs to the class-II pyridine nucleotide-disulfide oxidoreductase family.</text>
</comment>
<gene>
    <name type="primary">trxB</name>
    <name type="synonym">yvcH</name>
    <name type="ordered locus">BSU34790</name>
</gene>
<reference key="1">
    <citation type="submission" date="1997-04" db="EMBL/GenBank/DDBJ databases">
        <authorList>
            <person name="Denizot F."/>
        </authorList>
    </citation>
    <scope>NUCLEOTIDE SEQUENCE [GENOMIC DNA]</scope>
    <source>
        <strain>168</strain>
    </source>
</reference>
<reference key="2">
    <citation type="journal article" date="1997" name="Nature">
        <title>The complete genome sequence of the Gram-positive bacterium Bacillus subtilis.</title>
        <authorList>
            <person name="Kunst F."/>
            <person name="Ogasawara N."/>
            <person name="Moszer I."/>
            <person name="Albertini A.M."/>
            <person name="Alloni G."/>
            <person name="Azevedo V."/>
            <person name="Bertero M.G."/>
            <person name="Bessieres P."/>
            <person name="Bolotin A."/>
            <person name="Borchert S."/>
            <person name="Borriss R."/>
            <person name="Boursier L."/>
            <person name="Brans A."/>
            <person name="Braun M."/>
            <person name="Brignell S.C."/>
            <person name="Bron S."/>
            <person name="Brouillet S."/>
            <person name="Bruschi C.V."/>
            <person name="Caldwell B."/>
            <person name="Capuano V."/>
            <person name="Carter N.M."/>
            <person name="Choi S.-K."/>
            <person name="Codani J.-J."/>
            <person name="Connerton I.F."/>
            <person name="Cummings N.J."/>
            <person name="Daniel R.A."/>
            <person name="Denizot F."/>
            <person name="Devine K.M."/>
            <person name="Duesterhoeft A."/>
            <person name="Ehrlich S.D."/>
            <person name="Emmerson P.T."/>
            <person name="Entian K.-D."/>
            <person name="Errington J."/>
            <person name="Fabret C."/>
            <person name="Ferrari E."/>
            <person name="Foulger D."/>
            <person name="Fritz C."/>
            <person name="Fujita M."/>
            <person name="Fujita Y."/>
            <person name="Fuma S."/>
            <person name="Galizzi A."/>
            <person name="Galleron N."/>
            <person name="Ghim S.-Y."/>
            <person name="Glaser P."/>
            <person name="Goffeau A."/>
            <person name="Golightly E.J."/>
            <person name="Grandi G."/>
            <person name="Guiseppi G."/>
            <person name="Guy B.J."/>
            <person name="Haga K."/>
            <person name="Haiech J."/>
            <person name="Harwood C.R."/>
            <person name="Henaut A."/>
            <person name="Hilbert H."/>
            <person name="Holsappel S."/>
            <person name="Hosono S."/>
            <person name="Hullo M.-F."/>
            <person name="Itaya M."/>
            <person name="Jones L.-M."/>
            <person name="Joris B."/>
            <person name="Karamata D."/>
            <person name="Kasahara Y."/>
            <person name="Klaerr-Blanchard M."/>
            <person name="Klein C."/>
            <person name="Kobayashi Y."/>
            <person name="Koetter P."/>
            <person name="Koningstein G."/>
            <person name="Krogh S."/>
            <person name="Kumano M."/>
            <person name="Kurita K."/>
            <person name="Lapidus A."/>
            <person name="Lardinois S."/>
            <person name="Lauber J."/>
            <person name="Lazarevic V."/>
            <person name="Lee S.-M."/>
            <person name="Levine A."/>
            <person name="Liu H."/>
            <person name="Masuda S."/>
            <person name="Mauel C."/>
            <person name="Medigue C."/>
            <person name="Medina N."/>
            <person name="Mellado R.P."/>
            <person name="Mizuno M."/>
            <person name="Moestl D."/>
            <person name="Nakai S."/>
            <person name="Noback M."/>
            <person name="Noone D."/>
            <person name="O'Reilly M."/>
            <person name="Ogawa K."/>
            <person name="Ogiwara A."/>
            <person name="Oudega B."/>
            <person name="Park S.-H."/>
            <person name="Parro V."/>
            <person name="Pohl T.M."/>
            <person name="Portetelle D."/>
            <person name="Porwollik S."/>
            <person name="Prescott A.M."/>
            <person name="Presecan E."/>
            <person name="Pujic P."/>
            <person name="Purnelle B."/>
            <person name="Rapoport G."/>
            <person name="Rey M."/>
            <person name="Reynolds S."/>
            <person name="Rieger M."/>
            <person name="Rivolta C."/>
            <person name="Rocha E."/>
            <person name="Roche B."/>
            <person name="Rose M."/>
            <person name="Sadaie Y."/>
            <person name="Sato T."/>
            <person name="Scanlan E."/>
            <person name="Schleich S."/>
            <person name="Schroeter R."/>
            <person name="Scoffone F."/>
            <person name="Sekiguchi J."/>
            <person name="Sekowska A."/>
            <person name="Seror S.J."/>
            <person name="Serror P."/>
            <person name="Shin B.-S."/>
            <person name="Soldo B."/>
            <person name="Sorokin A."/>
            <person name="Tacconi E."/>
            <person name="Takagi T."/>
            <person name="Takahashi H."/>
            <person name="Takemaru K."/>
            <person name="Takeuchi M."/>
            <person name="Tamakoshi A."/>
            <person name="Tanaka T."/>
            <person name="Terpstra P."/>
            <person name="Tognoni A."/>
            <person name="Tosato V."/>
            <person name="Uchiyama S."/>
            <person name="Vandenbol M."/>
            <person name="Vannier F."/>
            <person name="Vassarotti A."/>
            <person name="Viari A."/>
            <person name="Wambutt R."/>
            <person name="Wedler E."/>
            <person name="Wedler H."/>
            <person name="Weitzenegger T."/>
            <person name="Winters P."/>
            <person name="Wipat A."/>
            <person name="Yamamoto H."/>
            <person name="Yamane K."/>
            <person name="Yasumoto K."/>
            <person name="Yata K."/>
            <person name="Yoshida K."/>
            <person name="Yoshikawa H.-F."/>
            <person name="Zumstein E."/>
            <person name="Yoshikawa H."/>
            <person name="Danchin A."/>
        </authorList>
    </citation>
    <scope>NUCLEOTIDE SEQUENCE [LARGE SCALE GENOMIC DNA]</scope>
    <source>
        <strain>168</strain>
    </source>
</reference>
<reference key="3">
    <citation type="journal article" date="1997" name="Electrophoresis">
        <title>First steps from a two-dimensional protein index towards a response-regulation map for Bacillus subtilis.</title>
        <authorList>
            <person name="Antelmann H."/>
            <person name="Bernhardt J."/>
            <person name="Schmid R."/>
            <person name="Mach H."/>
            <person name="Voelker U."/>
            <person name="Hecker M."/>
        </authorList>
    </citation>
    <scope>PROTEIN SEQUENCE OF 2-24</scope>
    <source>
        <strain>168 / IS58</strain>
    </source>
</reference>
<accession>P80880</accession>
<accession>O06971</accession>
<protein>
    <recommendedName>
        <fullName>Thioredoxin reductase</fullName>
        <shortName>TRXR</shortName>
        <ecNumber>1.8.1.9</ecNumber>
    </recommendedName>
    <alternativeName>
        <fullName>General stress protein 35</fullName>
        <shortName>GSP35</shortName>
    </alternativeName>
</protein>
<keyword id="KW-0963">Cytoplasm</keyword>
<keyword id="KW-0903">Direct protein sequencing</keyword>
<keyword id="KW-1015">Disulfide bond</keyword>
<keyword id="KW-0274">FAD</keyword>
<keyword id="KW-0285">Flavoprotein</keyword>
<keyword id="KW-0521">NADP</keyword>
<keyword id="KW-0560">Oxidoreductase</keyword>
<keyword id="KW-0676">Redox-active center</keyword>
<keyword id="KW-1185">Reference proteome</keyword>
<keyword id="KW-0346">Stress response</keyword>
<organism>
    <name type="scientific">Bacillus subtilis (strain 168)</name>
    <dbReference type="NCBI Taxonomy" id="224308"/>
    <lineage>
        <taxon>Bacteria</taxon>
        <taxon>Bacillati</taxon>
        <taxon>Bacillota</taxon>
        <taxon>Bacilli</taxon>
        <taxon>Bacillales</taxon>
        <taxon>Bacillaceae</taxon>
        <taxon>Bacillus</taxon>
    </lineage>
</organism>
<sequence>MSEEKIYDVIIIGAGPAGMTAAVYTSRANLSTLMIERGIPGGQMANTEDVENYPGFESILGPELSNKMFEHAKKFGAEYAYGDIKEVIDGKEYKVVKAGSKEYKARAVIIAAGAEYKKIGVPGEKELGGRGVSYCAVCDGAFFKGKELVVVGGGDSAVEEGVYLTRFASKVTIVHRRDKLRAQSILQARAFDNEKVDFLWNKTVKEIHEENGKVGNVTLVDTVTGEESEFKTDGVFIYIGMLPLSKPFENLGITNEEGYIETNDRMETKVEGIFAAGDIREKSLRQIVTATGDGSIAAQSVQHYVEELQETLKTLK</sequence>
<dbReference type="EC" id="1.8.1.9"/>
<dbReference type="EMBL" id="Z94043">
    <property type="protein sequence ID" value="CAB08055.1"/>
    <property type="molecule type" value="Genomic_DNA"/>
</dbReference>
<dbReference type="EMBL" id="AL009126">
    <property type="protein sequence ID" value="CAB15484.1"/>
    <property type="molecule type" value="Genomic_DNA"/>
</dbReference>
<dbReference type="PIR" id="A69727">
    <property type="entry name" value="A69727"/>
</dbReference>
<dbReference type="RefSeq" id="NP_391359.1">
    <property type="nucleotide sequence ID" value="NC_000964.3"/>
</dbReference>
<dbReference type="RefSeq" id="WP_003243021.1">
    <property type="nucleotide sequence ID" value="NZ_OZ025638.1"/>
</dbReference>
<dbReference type="SMR" id="P80880"/>
<dbReference type="FunCoup" id="P80880">
    <property type="interactions" value="397"/>
</dbReference>
<dbReference type="STRING" id="224308.BSU34790"/>
<dbReference type="jPOST" id="P80880"/>
<dbReference type="PaxDb" id="224308-BSU34790"/>
<dbReference type="EnsemblBacteria" id="CAB15484">
    <property type="protein sequence ID" value="CAB15484"/>
    <property type="gene ID" value="BSU_34790"/>
</dbReference>
<dbReference type="GeneID" id="936549"/>
<dbReference type="KEGG" id="bsu:BSU34790"/>
<dbReference type="PATRIC" id="fig|224308.179.peg.3767"/>
<dbReference type="eggNOG" id="COG0492">
    <property type="taxonomic scope" value="Bacteria"/>
</dbReference>
<dbReference type="InParanoid" id="P80880"/>
<dbReference type="OrthoDB" id="9806179at2"/>
<dbReference type="PhylomeDB" id="P80880"/>
<dbReference type="BioCyc" id="BSUB:BSU34790-MONOMER"/>
<dbReference type="Proteomes" id="UP000001570">
    <property type="component" value="Chromosome"/>
</dbReference>
<dbReference type="GO" id="GO:0005737">
    <property type="term" value="C:cytoplasm"/>
    <property type="evidence" value="ECO:0007669"/>
    <property type="project" value="UniProtKB-SubCell"/>
</dbReference>
<dbReference type="GO" id="GO:0004791">
    <property type="term" value="F:thioredoxin-disulfide reductase (NADPH) activity"/>
    <property type="evidence" value="ECO:0000318"/>
    <property type="project" value="GO_Central"/>
</dbReference>
<dbReference type="GO" id="GO:0045454">
    <property type="term" value="P:cell redox homeostasis"/>
    <property type="evidence" value="ECO:0000318"/>
    <property type="project" value="GO_Central"/>
</dbReference>
<dbReference type="GO" id="GO:0019430">
    <property type="term" value="P:removal of superoxide radicals"/>
    <property type="evidence" value="ECO:0007669"/>
    <property type="project" value="InterPro"/>
</dbReference>
<dbReference type="Gene3D" id="3.50.50.60">
    <property type="entry name" value="FAD/NAD(P)-binding domain"/>
    <property type="match status" value="2"/>
</dbReference>
<dbReference type="InterPro" id="IPR036188">
    <property type="entry name" value="FAD/NAD-bd_sf"/>
</dbReference>
<dbReference type="InterPro" id="IPR023753">
    <property type="entry name" value="FAD/NAD-binding_dom"/>
</dbReference>
<dbReference type="InterPro" id="IPR050097">
    <property type="entry name" value="Ferredoxin-NADP_redctase_2"/>
</dbReference>
<dbReference type="InterPro" id="IPR008255">
    <property type="entry name" value="Pyr_nucl-diS_OxRdtase_2_AS"/>
</dbReference>
<dbReference type="InterPro" id="IPR005982">
    <property type="entry name" value="Thioredox_Rdtase"/>
</dbReference>
<dbReference type="NCBIfam" id="TIGR01292">
    <property type="entry name" value="TRX_reduct"/>
    <property type="match status" value="1"/>
</dbReference>
<dbReference type="PANTHER" id="PTHR48105">
    <property type="entry name" value="THIOREDOXIN REDUCTASE 1-RELATED-RELATED"/>
    <property type="match status" value="1"/>
</dbReference>
<dbReference type="Pfam" id="PF07992">
    <property type="entry name" value="Pyr_redox_2"/>
    <property type="match status" value="1"/>
</dbReference>
<dbReference type="PRINTS" id="PR00368">
    <property type="entry name" value="FADPNR"/>
</dbReference>
<dbReference type="PRINTS" id="PR00469">
    <property type="entry name" value="PNDRDTASEII"/>
</dbReference>
<dbReference type="SUPFAM" id="SSF51905">
    <property type="entry name" value="FAD/NAD(P)-binding domain"/>
    <property type="match status" value="1"/>
</dbReference>
<dbReference type="PROSITE" id="PS00573">
    <property type="entry name" value="PYRIDINE_REDOX_2"/>
    <property type="match status" value="1"/>
</dbReference>
<name>TRXB_BACSU</name>
<feature type="initiator methionine" description="Removed" evidence="3">
    <location>
        <position position="1"/>
    </location>
</feature>
<feature type="chain" id="PRO_0000166719" description="Thioredoxin reductase">
    <location>
        <begin position="2"/>
        <end position="316"/>
    </location>
</feature>
<feature type="binding site" evidence="2">
    <location>
        <begin position="36"/>
        <end position="43"/>
    </location>
    <ligand>
        <name>FAD</name>
        <dbReference type="ChEBI" id="CHEBI:57692"/>
    </ligand>
</feature>
<feature type="binding site" evidence="2">
    <location>
        <begin position="278"/>
        <end position="287"/>
    </location>
    <ligand>
        <name>FAD</name>
        <dbReference type="ChEBI" id="CHEBI:57692"/>
    </ligand>
</feature>
<feature type="disulfide bond" description="Redox-active" evidence="2">
    <location>
        <begin position="135"/>
        <end position="138"/>
    </location>
</feature>
<feature type="sequence conflict" description="In Ref. 3; AA sequence." evidence="4" ref="3">
    <original>S</original>
    <variation>A</variation>
    <location>
        <position position="2"/>
    </location>
</feature>
<feature type="sequence conflict" description="In Ref. 3; AA sequence." evidence="4" ref="3">
    <original>Y</original>
    <variation>E</variation>
    <location>
        <position position="7"/>
    </location>
</feature>
<proteinExistence type="evidence at protein level"/>